<gene>
    <name evidence="1" type="primary">solA</name>
    <name type="ordered locus">ECUMN_1233</name>
</gene>
<name>MTOX_ECOLU</name>
<sequence>MKYDLIIIGSGSVGAAAGYYATRAGLNVLMTDAHMPPHQHGSHHGDTRLIRHAYGEGEKYVPLVLRAQTLWDELSRHNEEDPIFVRSGVINLGPADSTFLANVAHSAEQWQLNVEKLDAQGIMARWPEIRVPDNYIGLFETDSGFLRSELAIKTWIQLAKEAGCAQLFNCPVTAIRHDDDGVTIETADGDYQAKKAIVCAGTWVKDLLPELPVQPVRKVFAWYQADGRYSVKNKFPAFTGELPNGDQYYGFPAENDALKIGKHNGGQVIHSADERVPFAEVASDGSEAFPFLRNVLPGIGCCLYGAACTYDNSPDEDFIIDTLPGHDNTLLITGLSGHGFKFASVLGEIAADFAQDKKSDFDLTPFRLSRFQ</sequence>
<keyword id="KW-0274">FAD</keyword>
<keyword id="KW-0285">Flavoprotein</keyword>
<keyword id="KW-0560">Oxidoreductase</keyword>
<feature type="chain" id="PRO_1000127439" description="N-methyl-L-tryptophan oxidase">
    <location>
        <begin position="1"/>
        <end position="372"/>
    </location>
</feature>
<feature type="binding site" evidence="1">
    <location>
        <begin position="4"/>
        <end position="34"/>
    </location>
    <ligand>
        <name>FAD</name>
        <dbReference type="ChEBI" id="CHEBI:57692"/>
    </ligand>
</feature>
<feature type="modified residue" description="S-8alpha-FAD cysteine" evidence="1">
    <location>
        <position position="308"/>
    </location>
</feature>
<comment type="function">
    <text evidence="1">Catalyzes the oxidative demethylation of N-methyl-L-tryptophan.</text>
</comment>
<comment type="catalytic activity">
    <reaction evidence="1">
        <text>N(alpha)-methyl-L-tryptophan + O2 + H2O = L-tryptophan + formaldehyde + H2O2</text>
        <dbReference type="Rhea" id="RHEA:28006"/>
        <dbReference type="ChEBI" id="CHEBI:15377"/>
        <dbReference type="ChEBI" id="CHEBI:15379"/>
        <dbReference type="ChEBI" id="CHEBI:16240"/>
        <dbReference type="ChEBI" id="CHEBI:16842"/>
        <dbReference type="ChEBI" id="CHEBI:57283"/>
        <dbReference type="ChEBI" id="CHEBI:57912"/>
    </reaction>
</comment>
<comment type="cofactor">
    <cofactor evidence="1">
        <name>FAD</name>
        <dbReference type="ChEBI" id="CHEBI:57692"/>
    </cofactor>
    <text evidence="1">Binds 1 FAD per subunit.</text>
</comment>
<comment type="subunit">
    <text evidence="1">Monomer.</text>
</comment>
<comment type="similarity">
    <text evidence="1">Belongs to the MSOX/MTOX family. MTOX subfamily.</text>
</comment>
<organism>
    <name type="scientific">Escherichia coli O17:K52:H18 (strain UMN026 / ExPEC)</name>
    <dbReference type="NCBI Taxonomy" id="585056"/>
    <lineage>
        <taxon>Bacteria</taxon>
        <taxon>Pseudomonadati</taxon>
        <taxon>Pseudomonadota</taxon>
        <taxon>Gammaproteobacteria</taxon>
        <taxon>Enterobacterales</taxon>
        <taxon>Enterobacteriaceae</taxon>
        <taxon>Escherichia</taxon>
    </lineage>
</organism>
<accession>B7NAT4</accession>
<proteinExistence type="inferred from homology"/>
<dbReference type="EC" id="1.5.3.-" evidence="1"/>
<dbReference type="EMBL" id="CU928163">
    <property type="protein sequence ID" value="CAR12443.1"/>
    <property type="molecule type" value="Genomic_DNA"/>
</dbReference>
<dbReference type="RefSeq" id="WP_000872828.1">
    <property type="nucleotide sequence ID" value="NC_011751.1"/>
</dbReference>
<dbReference type="RefSeq" id="YP_002411986.1">
    <property type="nucleotide sequence ID" value="NC_011751.1"/>
</dbReference>
<dbReference type="SMR" id="B7NAT4"/>
<dbReference type="STRING" id="585056.ECUMN_1233"/>
<dbReference type="KEGG" id="eum:ECUMN_1233"/>
<dbReference type="PATRIC" id="fig|585056.7.peg.1437"/>
<dbReference type="HOGENOM" id="CLU_007884_2_1_6"/>
<dbReference type="Proteomes" id="UP000007097">
    <property type="component" value="Chromosome"/>
</dbReference>
<dbReference type="GO" id="GO:0005829">
    <property type="term" value="C:cytosol"/>
    <property type="evidence" value="ECO:0007669"/>
    <property type="project" value="TreeGrafter"/>
</dbReference>
<dbReference type="GO" id="GO:0050660">
    <property type="term" value="F:flavin adenine dinucleotide binding"/>
    <property type="evidence" value="ECO:0007669"/>
    <property type="project" value="InterPro"/>
</dbReference>
<dbReference type="GO" id="GO:0050131">
    <property type="term" value="F:N-methyl-L-amino-acid oxidase activity"/>
    <property type="evidence" value="ECO:0007669"/>
    <property type="project" value="InterPro"/>
</dbReference>
<dbReference type="GO" id="GO:0008115">
    <property type="term" value="F:sarcosine oxidase activity"/>
    <property type="evidence" value="ECO:0007669"/>
    <property type="project" value="TreeGrafter"/>
</dbReference>
<dbReference type="Gene3D" id="3.30.9.10">
    <property type="entry name" value="D-Amino Acid Oxidase, subunit A, domain 2"/>
    <property type="match status" value="1"/>
</dbReference>
<dbReference type="Gene3D" id="3.50.50.60">
    <property type="entry name" value="FAD/NAD(P)-binding domain"/>
    <property type="match status" value="1"/>
</dbReference>
<dbReference type="HAMAP" id="MF_00515">
    <property type="entry name" value="MTOX"/>
    <property type="match status" value="1"/>
</dbReference>
<dbReference type="InterPro" id="IPR006076">
    <property type="entry name" value="FAD-dep_OxRdtase"/>
</dbReference>
<dbReference type="InterPro" id="IPR036188">
    <property type="entry name" value="FAD/NAD-bd_sf"/>
</dbReference>
<dbReference type="InterPro" id="IPR023493">
    <property type="entry name" value="Me_Trp_Oxase_MTOX"/>
</dbReference>
<dbReference type="InterPro" id="IPR045170">
    <property type="entry name" value="MTOX"/>
</dbReference>
<dbReference type="NCBIfam" id="NF008425">
    <property type="entry name" value="PRK11259.1"/>
    <property type="match status" value="1"/>
</dbReference>
<dbReference type="PANTHER" id="PTHR10961:SF7">
    <property type="entry name" value="FAD DEPENDENT OXIDOREDUCTASE DOMAIN-CONTAINING PROTEIN"/>
    <property type="match status" value="1"/>
</dbReference>
<dbReference type="PANTHER" id="PTHR10961">
    <property type="entry name" value="PEROXISOMAL SARCOSINE OXIDASE"/>
    <property type="match status" value="1"/>
</dbReference>
<dbReference type="Pfam" id="PF01266">
    <property type="entry name" value="DAO"/>
    <property type="match status" value="1"/>
</dbReference>
<dbReference type="SUPFAM" id="SSF54373">
    <property type="entry name" value="FAD-linked reductases, C-terminal domain"/>
    <property type="match status" value="1"/>
</dbReference>
<dbReference type="SUPFAM" id="SSF51905">
    <property type="entry name" value="FAD/NAD(P)-binding domain"/>
    <property type="match status" value="1"/>
</dbReference>
<protein>
    <recommendedName>
        <fullName evidence="1">N-methyl-L-tryptophan oxidase</fullName>
        <shortName evidence="1">MTOX</shortName>
        <ecNumber evidence="1">1.5.3.-</ecNumber>
    </recommendedName>
</protein>
<reference key="1">
    <citation type="journal article" date="2009" name="PLoS Genet.">
        <title>Organised genome dynamics in the Escherichia coli species results in highly diverse adaptive paths.</title>
        <authorList>
            <person name="Touchon M."/>
            <person name="Hoede C."/>
            <person name="Tenaillon O."/>
            <person name="Barbe V."/>
            <person name="Baeriswyl S."/>
            <person name="Bidet P."/>
            <person name="Bingen E."/>
            <person name="Bonacorsi S."/>
            <person name="Bouchier C."/>
            <person name="Bouvet O."/>
            <person name="Calteau A."/>
            <person name="Chiapello H."/>
            <person name="Clermont O."/>
            <person name="Cruveiller S."/>
            <person name="Danchin A."/>
            <person name="Diard M."/>
            <person name="Dossat C."/>
            <person name="Karoui M.E."/>
            <person name="Frapy E."/>
            <person name="Garry L."/>
            <person name="Ghigo J.M."/>
            <person name="Gilles A.M."/>
            <person name="Johnson J."/>
            <person name="Le Bouguenec C."/>
            <person name="Lescat M."/>
            <person name="Mangenot S."/>
            <person name="Martinez-Jehanne V."/>
            <person name="Matic I."/>
            <person name="Nassif X."/>
            <person name="Oztas S."/>
            <person name="Petit M.A."/>
            <person name="Pichon C."/>
            <person name="Rouy Z."/>
            <person name="Ruf C.S."/>
            <person name="Schneider D."/>
            <person name="Tourret J."/>
            <person name="Vacherie B."/>
            <person name="Vallenet D."/>
            <person name="Medigue C."/>
            <person name="Rocha E.P.C."/>
            <person name="Denamur E."/>
        </authorList>
    </citation>
    <scope>NUCLEOTIDE SEQUENCE [LARGE SCALE GENOMIC DNA]</scope>
    <source>
        <strain>UMN026 / ExPEC</strain>
    </source>
</reference>
<evidence type="ECO:0000255" key="1">
    <source>
        <dbReference type="HAMAP-Rule" id="MF_00515"/>
    </source>
</evidence>